<protein>
    <recommendedName>
        <fullName>Ferredoxin-1</fullName>
    </recommendedName>
    <alternativeName>
        <fullName>Ferredoxin I</fullName>
    </alternativeName>
</protein>
<proteinExistence type="evidence at protein level"/>
<accession>P27320</accession>
<reference key="1">
    <citation type="journal article" date="1997" name="Physiol. Plantarum">
        <title>Cloning, characterization and transcriptional studies of ferredoxin genes from the mesophilic cyanobacterium Synechocystis sp. PCC 6803 and the thermophilic cyanobacterium Synechococcus vulcanus.</title>
        <authorList>
            <person name="Nakamoto H."/>
            <person name="Suzuki T."/>
        </authorList>
    </citation>
    <scope>NUCLEOTIDE SEQUENCE [GENOMIC DNA]</scope>
</reference>
<reference key="2">
    <citation type="journal article" date="1997" name="Gene">
        <title>Three insertion sequences from the cyanobacterium Synechocystis PCC6803 support the occurrence of horizontal DNA transfer among bacteria.</title>
        <authorList>
            <person name="Cassier-Chauvat C."/>
            <person name="Poncelet M."/>
            <person name="Chauvat F."/>
        </authorList>
    </citation>
    <scope>NUCLEOTIDE SEQUENCE [GENOMIC DNA]</scope>
</reference>
<reference key="3">
    <citation type="journal article" date="1995" name="DNA Res.">
        <title>Sequence analysis of the genome of the unicellular cyanobacterium Synechocystis sp. strain PCC6803. I. Sequence features in the 1 Mb region from map positions 64% to 92% of the genome.</title>
        <authorList>
            <person name="Kaneko T."/>
            <person name="Tanaka A."/>
            <person name="Sato S."/>
            <person name="Kotani H."/>
            <person name="Sazuka T."/>
            <person name="Miyajima N."/>
            <person name="Sugiura M."/>
            <person name="Tabata S."/>
        </authorList>
    </citation>
    <scope>NUCLEOTIDE SEQUENCE [LARGE SCALE GENOMIC DNA]</scope>
    <source>
        <strain>ATCC 27184 / PCC 6803 / N-1</strain>
    </source>
</reference>
<reference key="4">
    <citation type="journal article" date="1996" name="DNA Res.">
        <title>Sequence analysis of the genome of the unicellular cyanobacterium Synechocystis sp. strain PCC6803. II. Sequence determination of the entire genome and assignment of potential protein-coding regions.</title>
        <authorList>
            <person name="Kaneko T."/>
            <person name="Sato S."/>
            <person name="Kotani H."/>
            <person name="Tanaka A."/>
            <person name="Asamizu E."/>
            <person name="Nakamura Y."/>
            <person name="Miyajima N."/>
            <person name="Hirosawa M."/>
            <person name="Sugiura M."/>
            <person name="Sasamoto S."/>
            <person name="Kimura T."/>
            <person name="Hosouchi T."/>
            <person name="Matsuno A."/>
            <person name="Muraki A."/>
            <person name="Nakazaki N."/>
            <person name="Naruo K."/>
            <person name="Okumura S."/>
            <person name="Shimpo S."/>
            <person name="Takeuchi C."/>
            <person name="Wada T."/>
            <person name="Watanabe A."/>
            <person name="Yamada M."/>
            <person name="Yasuda M."/>
            <person name="Tabata S."/>
        </authorList>
    </citation>
    <scope>NUCLEOTIDE SEQUENCE [LARGE SCALE GENOMIC DNA]</scope>
    <source>
        <strain>ATCC 27184 / PCC 6803 / Kazusa</strain>
    </source>
</reference>
<reference key="5">
    <citation type="journal article" date="1992" name="Biochim. Biophys. Acta">
        <title>Ferredoxin and flavodoxin from the cyanobacterium Synechocystis sp PCC 6803.</title>
        <authorList>
            <person name="Bottin H."/>
            <person name="Lagoutte B."/>
        </authorList>
    </citation>
    <scope>PROTEIN SEQUENCE OF 2-97</scope>
</reference>
<reference key="6">
    <citation type="journal article" date="1997" name="Electrophoresis">
        <title>Towards a proteome project of cyanobacterium Synechocystis sp. strain PCC6803: linking 130 protein spots with their respective genes.</title>
        <authorList>
            <person name="Sazuka T."/>
            <person name="Ohara O."/>
        </authorList>
    </citation>
    <scope>PROTEIN SEQUENCE OF 2-15</scope>
</reference>
<reference key="7">
    <citation type="journal article" date="2011" name="Biochim. Biophys. Acta">
        <title>A screen for potential ferredoxin electron transfer partners uncovers new, redox dependent interactions.</title>
        <authorList>
            <person name="Hanke G.T."/>
            <person name="Satomi Y."/>
            <person name="Shinmura K."/>
            <person name="Takao T."/>
            <person name="Hase T."/>
        </authorList>
    </citation>
    <scope>INTERACTION WITH RPAA AND OTHER PROTEINS</scope>
    <source>
        <strain>ATCC 27184 / PCC 6803 / Kazusa</strain>
    </source>
</reference>
<reference key="8">
    <citation type="journal article" date="1995" name="Biochemistry">
        <title>1H and 15N NMR sequential assignment, secondary structure, and tertiary fold of [2Fe-2S] ferredoxin from Synechocystis sp. PCC 6803.</title>
        <authorList>
            <person name="Lelong C."/>
            <person name="Setif P."/>
            <person name="Bottin H."/>
            <person name="Andre F."/>
            <person name="Neumann J.-M."/>
        </authorList>
    </citation>
    <scope>STRUCTURE BY NMR</scope>
</reference>
<reference key="9">
    <citation type="journal article" date="2007" name="Nature">
        <title>Structural snapshots along the reaction pathway of ferredoxin-thioredoxin reductase.</title>
        <authorList>
            <person name="Dai S."/>
            <person name="Friemann R."/>
            <person name="Glauser D.A."/>
            <person name="Bourquin F."/>
            <person name="Manieri W."/>
            <person name="Schurmann P."/>
            <person name="Eklund H."/>
        </authorList>
    </citation>
    <scope>X-RAY CRYSTALLOGRAPHY (2.4 ANGSTROMS) OF 2-97 IN COMPLEXES WITH FTRC; FTRV AND TRX-F</scope>
    <scope>SUBUNIT</scope>
</reference>
<sequence>MASYTVKLITPDGESSIECSDDTYILDAAEEAGLDLPYSCRAGACSTCAGKITAGSVDQSDQSFLDDDQIEAGYVLTCVAYPTSDCTIETHKEEDLY</sequence>
<name>FER_SYNY3</name>
<comment type="function">
    <text>Ferredoxins are iron-sulfur proteins that transfer electrons in a wide variety of metabolic reactions.</text>
</comment>
<comment type="cofactor">
    <cofactor>
        <name>[2Fe-2S] cluster</name>
        <dbReference type="ChEBI" id="CHEBI:190135"/>
    </cofactor>
    <text>Binds 1 [2Fe-2S] cluster.</text>
</comment>
<comment type="biophysicochemical properties">
    <redoxPotential>
        <text>E(0) is -412 mV.</text>
    </redoxPotential>
</comment>
<comment type="subunit">
    <text evidence="3 4">Forms a complex with heterodimeric ferredoxin-thioredoxin reductase (FTR, ftrC) under reducing and oxidizing condition (PubMed:20869472) and thioredoxin (PubMed:17611542, PubMed:20869472). Interacts with a number of proteins including RpaA; binding to RpaA is higher when ferredoxin is reduced (PubMed:20869472).</text>
</comment>
<comment type="interaction">
    <interactant intactId="EBI-863421">
        <id>P27320</id>
    </interactant>
    <interactant intactId="EBI-863211">
        <id>Q55389</id>
        <label>ftrC</label>
    </interactant>
    <organismsDiffer>false</organismsDiffer>
    <experiments>4</experiments>
</comment>
<comment type="interaction">
    <interactant intactId="EBI-863421">
        <id>P27320</id>
    </interactant>
    <interactant intactId="EBI-863219">
        <id>Q55781</id>
        <label>ftrV</label>
    </interactant>
    <organismsDiffer>false</organismsDiffer>
    <experiments>4</experiments>
</comment>
<comment type="interaction">
    <interactant intactId="EBI-863421">
        <id>P27320</id>
    </interactant>
    <interactant intactId="EBI-595298">
        <id>P19569</id>
        <label>psaD</label>
    </interactant>
    <organismsDiffer>false</organismsDiffer>
    <experiments>3</experiments>
</comment>
<comment type="similarity">
    <text evidence="7">Belongs to the 2Fe2S plant-type ferredoxin family.</text>
</comment>
<gene>
    <name type="primary">petF</name>
    <name type="synonym">fed</name>
    <name type="ordered locus">ssl0020</name>
</gene>
<feature type="initiator methionine" description="Removed" evidence="2 6">
    <location>
        <position position="1"/>
    </location>
</feature>
<feature type="chain" id="PRO_0000189381" description="Ferredoxin-1">
    <location>
        <begin position="2"/>
        <end position="97"/>
    </location>
</feature>
<feature type="domain" description="2Fe-2S ferredoxin-type" evidence="1">
    <location>
        <begin position="4"/>
        <end position="94"/>
    </location>
</feature>
<feature type="binding site" evidence="1 5">
    <location>
        <position position="40"/>
    </location>
    <ligand>
        <name>[2Fe-2S] cluster</name>
        <dbReference type="ChEBI" id="CHEBI:190135"/>
    </ligand>
</feature>
<feature type="binding site" evidence="1 5">
    <location>
        <position position="45"/>
    </location>
    <ligand>
        <name>[2Fe-2S] cluster</name>
        <dbReference type="ChEBI" id="CHEBI:190135"/>
    </ligand>
</feature>
<feature type="binding site" evidence="1 5">
    <location>
        <position position="48"/>
    </location>
    <ligand>
        <name>[2Fe-2S] cluster</name>
        <dbReference type="ChEBI" id="CHEBI:190135"/>
    </ligand>
</feature>
<feature type="binding site" evidence="1 5">
    <location>
        <position position="78"/>
    </location>
    <ligand>
        <name>[2Fe-2S] cluster</name>
        <dbReference type="ChEBI" id="CHEBI:190135"/>
    </ligand>
</feature>
<feature type="disulfide bond" evidence="7">
    <location>
        <begin position="19"/>
        <end position="86"/>
    </location>
</feature>
<feature type="sequence conflict" description="In Ref. 6; AA sequence." evidence="7" ref="6">
    <original>S</original>
    <variation>N</variation>
    <location>
        <position position="15"/>
    </location>
</feature>
<feature type="strand" evidence="9">
    <location>
        <begin position="3"/>
        <end position="10"/>
    </location>
</feature>
<feature type="strand" evidence="9">
    <location>
        <begin position="13"/>
        <end position="20"/>
    </location>
</feature>
<feature type="helix" evidence="9">
    <location>
        <begin position="25"/>
        <end position="32"/>
    </location>
</feature>
<feature type="strand" evidence="9">
    <location>
        <begin position="39"/>
        <end position="46"/>
    </location>
</feature>
<feature type="strand" evidence="9">
    <location>
        <begin position="49"/>
        <end position="55"/>
    </location>
</feature>
<feature type="strand" evidence="8">
    <location>
        <begin position="63"/>
        <end position="66"/>
    </location>
</feature>
<feature type="helix" evidence="9">
    <location>
        <begin position="67"/>
        <end position="71"/>
    </location>
</feature>
<feature type="strand" evidence="9">
    <location>
        <begin position="74"/>
        <end position="76"/>
    </location>
</feature>
<feature type="helix" evidence="9">
    <location>
        <begin position="77"/>
        <end position="79"/>
    </location>
</feature>
<feature type="strand" evidence="9">
    <location>
        <begin position="81"/>
        <end position="89"/>
    </location>
</feature>
<feature type="helix" evidence="9">
    <location>
        <begin position="93"/>
        <end position="95"/>
    </location>
</feature>
<dbReference type="EMBL" id="D85607">
    <property type="protein sequence ID" value="BAA24020.1"/>
    <property type="molecule type" value="Genomic_DNA"/>
</dbReference>
<dbReference type="EMBL" id="U38802">
    <property type="protein sequence ID" value="AAB72025.1"/>
    <property type="molecule type" value="Genomic_DNA"/>
</dbReference>
<dbReference type="EMBL" id="BA000022">
    <property type="protein sequence ID" value="BAA10197.1"/>
    <property type="molecule type" value="Genomic_DNA"/>
</dbReference>
<dbReference type="PIR" id="S76345">
    <property type="entry name" value="FEYB6"/>
</dbReference>
<dbReference type="PDB" id="1DOX">
    <property type="method" value="NMR"/>
    <property type="chains" value="A=2-97"/>
</dbReference>
<dbReference type="PDB" id="1DOY">
    <property type="method" value="NMR"/>
    <property type="chains" value="A=2-97"/>
</dbReference>
<dbReference type="PDB" id="1OFF">
    <property type="method" value="X-ray"/>
    <property type="resolution" value="1.80 A"/>
    <property type="chains" value="A=2-97"/>
</dbReference>
<dbReference type="PDB" id="2KAJ">
    <property type="method" value="NMR"/>
    <property type="chains" value="A=2-97"/>
</dbReference>
<dbReference type="PDB" id="2PVG">
    <property type="method" value="X-ray"/>
    <property type="resolution" value="2.40 A"/>
    <property type="chains" value="C=2-97"/>
</dbReference>
<dbReference type="PDB" id="2PVO">
    <property type="method" value="X-ray"/>
    <property type="resolution" value="3.40 A"/>
    <property type="chains" value="D=2-97"/>
</dbReference>
<dbReference type="PDB" id="5AUK">
    <property type="method" value="X-ray"/>
    <property type="resolution" value="1.62 A"/>
    <property type="chains" value="A=2-97"/>
</dbReference>
<dbReference type="PDBsum" id="1DOX"/>
<dbReference type="PDBsum" id="1DOY"/>
<dbReference type="PDBsum" id="1OFF"/>
<dbReference type="PDBsum" id="2KAJ"/>
<dbReference type="PDBsum" id="2PVG"/>
<dbReference type="PDBsum" id="2PVO"/>
<dbReference type="PDBsum" id="5AUK"/>
<dbReference type="BMRB" id="P27320"/>
<dbReference type="SMR" id="P27320"/>
<dbReference type="DIP" id="DIP-35027N"/>
<dbReference type="IntAct" id="P27320">
    <property type="interactions" value="7"/>
</dbReference>
<dbReference type="MINT" id="P27320"/>
<dbReference type="STRING" id="1148.gene:10499694"/>
<dbReference type="PaxDb" id="1148-1001570"/>
<dbReference type="EnsemblBacteria" id="BAA10197">
    <property type="protein sequence ID" value="BAA10197"/>
    <property type="gene ID" value="BAA10197"/>
</dbReference>
<dbReference type="KEGG" id="syn:ssl0020"/>
<dbReference type="eggNOG" id="COG1018">
    <property type="taxonomic scope" value="Bacteria"/>
</dbReference>
<dbReference type="InParanoid" id="P27320"/>
<dbReference type="PhylomeDB" id="P27320"/>
<dbReference type="EvolutionaryTrace" id="P27320"/>
<dbReference type="Proteomes" id="UP000001425">
    <property type="component" value="Chromosome"/>
</dbReference>
<dbReference type="GO" id="GO:0051537">
    <property type="term" value="F:2 iron, 2 sulfur cluster binding"/>
    <property type="evidence" value="ECO:0000314"/>
    <property type="project" value="UniProtKB"/>
</dbReference>
<dbReference type="GO" id="GO:0009055">
    <property type="term" value="F:electron transfer activity"/>
    <property type="evidence" value="ECO:0007669"/>
    <property type="project" value="InterPro"/>
</dbReference>
<dbReference type="GO" id="GO:0046872">
    <property type="term" value="F:metal ion binding"/>
    <property type="evidence" value="ECO:0007669"/>
    <property type="project" value="UniProtKB-KW"/>
</dbReference>
<dbReference type="GO" id="GO:0022900">
    <property type="term" value="P:electron transport chain"/>
    <property type="evidence" value="ECO:0007669"/>
    <property type="project" value="InterPro"/>
</dbReference>
<dbReference type="CDD" id="cd00207">
    <property type="entry name" value="fer2"/>
    <property type="match status" value="1"/>
</dbReference>
<dbReference type="FunFam" id="3.10.20.30:FF:000014">
    <property type="entry name" value="Ferredoxin"/>
    <property type="match status" value="1"/>
</dbReference>
<dbReference type="Gene3D" id="3.10.20.30">
    <property type="match status" value="1"/>
</dbReference>
<dbReference type="InterPro" id="IPR036010">
    <property type="entry name" value="2Fe-2S_ferredoxin-like_sf"/>
</dbReference>
<dbReference type="InterPro" id="IPR001041">
    <property type="entry name" value="2Fe-2S_ferredoxin-type"/>
</dbReference>
<dbReference type="InterPro" id="IPR006058">
    <property type="entry name" value="2Fe2S_fd_BS"/>
</dbReference>
<dbReference type="InterPro" id="IPR012675">
    <property type="entry name" value="Beta-grasp_dom_sf"/>
</dbReference>
<dbReference type="InterPro" id="IPR010241">
    <property type="entry name" value="Fd_pln"/>
</dbReference>
<dbReference type="NCBIfam" id="TIGR02008">
    <property type="entry name" value="fdx_plant"/>
    <property type="match status" value="1"/>
</dbReference>
<dbReference type="PANTHER" id="PTHR43112">
    <property type="entry name" value="FERREDOXIN"/>
    <property type="match status" value="1"/>
</dbReference>
<dbReference type="PANTHER" id="PTHR43112:SF3">
    <property type="entry name" value="FERREDOXIN-2, CHLOROPLASTIC"/>
    <property type="match status" value="1"/>
</dbReference>
<dbReference type="Pfam" id="PF00111">
    <property type="entry name" value="Fer2"/>
    <property type="match status" value="1"/>
</dbReference>
<dbReference type="SUPFAM" id="SSF54292">
    <property type="entry name" value="2Fe-2S ferredoxin-like"/>
    <property type="match status" value="1"/>
</dbReference>
<dbReference type="PROSITE" id="PS00197">
    <property type="entry name" value="2FE2S_FER_1"/>
    <property type="match status" value="1"/>
</dbReference>
<dbReference type="PROSITE" id="PS51085">
    <property type="entry name" value="2FE2S_FER_2"/>
    <property type="match status" value="1"/>
</dbReference>
<organism>
    <name type="scientific">Synechocystis sp. (strain ATCC 27184 / PCC 6803 / Kazusa)</name>
    <dbReference type="NCBI Taxonomy" id="1111708"/>
    <lineage>
        <taxon>Bacteria</taxon>
        <taxon>Bacillati</taxon>
        <taxon>Cyanobacteriota</taxon>
        <taxon>Cyanophyceae</taxon>
        <taxon>Synechococcales</taxon>
        <taxon>Merismopediaceae</taxon>
        <taxon>Synechocystis</taxon>
    </lineage>
</organism>
<keyword id="KW-0001">2Fe-2S</keyword>
<keyword id="KW-0002">3D-structure</keyword>
<keyword id="KW-0903">Direct protein sequencing</keyword>
<keyword id="KW-1015">Disulfide bond</keyword>
<keyword id="KW-0249">Electron transport</keyword>
<keyword id="KW-0408">Iron</keyword>
<keyword id="KW-0411">Iron-sulfur</keyword>
<keyword id="KW-0479">Metal-binding</keyword>
<keyword id="KW-1185">Reference proteome</keyword>
<keyword id="KW-0813">Transport</keyword>
<evidence type="ECO:0000255" key="1">
    <source>
        <dbReference type="PROSITE-ProRule" id="PRU00465"/>
    </source>
</evidence>
<evidence type="ECO:0000269" key="2">
    <source>
    </source>
</evidence>
<evidence type="ECO:0000269" key="3">
    <source>
    </source>
</evidence>
<evidence type="ECO:0000269" key="4">
    <source>
    </source>
</evidence>
<evidence type="ECO:0000269" key="5">
    <source>
    </source>
</evidence>
<evidence type="ECO:0000269" key="6">
    <source>
    </source>
</evidence>
<evidence type="ECO:0000305" key="7"/>
<evidence type="ECO:0007829" key="8">
    <source>
        <dbReference type="PDB" id="1DOX"/>
    </source>
</evidence>
<evidence type="ECO:0007829" key="9">
    <source>
        <dbReference type="PDB" id="5AUK"/>
    </source>
</evidence>